<name>CYSD_RHIJ3</name>
<keyword id="KW-0067">ATP-binding</keyword>
<keyword id="KW-0547">Nucleotide-binding</keyword>
<keyword id="KW-0548">Nucleotidyltransferase</keyword>
<keyword id="KW-0808">Transferase</keyword>
<reference key="1">
    <citation type="journal article" date="2006" name="Genome Biol.">
        <title>The genome of Rhizobium leguminosarum has recognizable core and accessory components.</title>
        <authorList>
            <person name="Young J.P.W."/>
            <person name="Crossman L.C."/>
            <person name="Johnston A.W.B."/>
            <person name="Thomson N.R."/>
            <person name="Ghazoui Z.F."/>
            <person name="Hull K.H."/>
            <person name="Wexler M."/>
            <person name="Curson A.R.J."/>
            <person name="Todd J.D."/>
            <person name="Poole P.S."/>
            <person name="Mauchline T.H."/>
            <person name="East A.K."/>
            <person name="Quail M.A."/>
            <person name="Churcher C."/>
            <person name="Arrowsmith C."/>
            <person name="Cherevach I."/>
            <person name="Chillingworth T."/>
            <person name="Clarke K."/>
            <person name="Cronin A."/>
            <person name="Davis P."/>
            <person name="Fraser A."/>
            <person name="Hance Z."/>
            <person name="Hauser H."/>
            <person name="Jagels K."/>
            <person name="Moule S."/>
            <person name="Mungall K."/>
            <person name="Norbertczak H."/>
            <person name="Rabbinowitsch E."/>
            <person name="Sanders M."/>
            <person name="Simmonds M."/>
            <person name="Whitehead S."/>
            <person name="Parkhill J."/>
        </authorList>
    </citation>
    <scope>NUCLEOTIDE SEQUENCE [LARGE SCALE GENOMIC DNA]</scope>
    <source>
        <strain>DSM 114642 / LMG 32736 / 3841</strain>
    </source>
</reference>
<comment type="function">
    <text evidence="1">With CysN forms the ATP sulfurylase (ATPS) that catalyzes the adenylation of sulfate producing adenosine 5'-phosphosulfate (APS) and diphosphate, the first enzymatic step in sulfur assimilation pathway. APS synthesis involves the formation of a high-energy phosphoric-sulfuric acid anhydride bond driven by GTP hydrolysis by CysN coupled to ATP hydrolysis by CysD.</text>
</comment>
<comment type="catalytic activity">
    <reaction evidence="1">
        <text>sulfate + ATP + H(+) = adenosine 5'-phosphosulfate + diphosphate</text>
        <dbReference type="Rhea" id="RHEA:18133"/>
        <dbReference type="ChEBI" id="CHEBI:15378"/>
        <dbReference type="ChEBI" id="CHEBI:16189"/>
        <dbReference type="ChEBI" id="CHEBI:30616"/>
        <dbReference type="ChEBI" id="CHEBI:33019"/>
        <dbReference type="ChEBI" id="CHEBI:58243"/>
        <dbReference type="EC" id="2.7.7.4"/>
    </reaction>
</comment>
<comment type="pathway">
    <text evidence="1">Sulfur metabolism; hydrogen sulfide biosynthesis; sulfite from sulfate: step 1/3.</text>
</comment>
<comment type="subunit">
    <text evidence="1">Heterodimer composed of CysD, the smaller subunit, and CysN.</text>
</comment>
<comment type="similarity">
    <text evidence="1">Belongs to the PAPS reductase family. CysD subfamily.</text>
</comment>
<dbReference type="EC" id="2.7.7.4" evidence="1"/>
<dbReference type="EMBL" id="AM236080">
    <property type="protein sequence ID" value="CAK06757.1"/>
    <property type="molecule type" value="Genomic_DNA"/>
</dbReference>
<dbReference type="RefSeq" id="WP_003546395.1">
    <property type="nucleotide sequence ID" value="NC_008380.1"/>
</dbReference>
<dbReference type="SMR" id="Q1MJV3"/>
<dbReference type="EnsemblBacteria" id="CAK06757">
    <property type="protein sequence ID" value="CAK06757"/>
    <property type="gene ID" value="RL1261"/>
</dbReference>
<dbReference type="GeneID" id="84668926"/>
<dbReference type="KEGG" id="rle:RL1261"/>
<dbReference type="eggNOG" id="COG0175">
    <property type="taxonomic scope" value="Bacteria"/>
</dbReference>
<dbReference type="HOGENOM" id="CLU_043026_0_0_5"/>
<dbReference type="UniPathway" id="UPA00140">
    <property type="reaction ID" value="UER00204"/>
</dbReference>
<dbReference type="Proteomes" id="UP000006575">
    <property type="component" value="Chromosome"/>
</dbReference>
<dbReference type="GO" id="GO:0005524">
    <property type="term" value="F:ATP binding"/>
    <property type="evidence" value="ECO:0007669"/>
    <property type="project" value="UniProtKB-KW"/>
</dbReference>
<dbReference type="GO" id="GO:0004781">
    <property type="term" value="F:sulfate adenylyltransferase (ATP) activity"/>
    <property type="evidence" value="ECO:0007669"/>
    <property type="project" value="UniProtKB-UniRule"/>
</dbReference>
<dbReference type="GO" id="GO:0070814">
    <property type="term" value="P:hydrogen sulfide biosynthetic process"/>
    <property type="evidence" value="ECO:0007669"/>
    <property type="project" value="UniProtKB-UniRule"/>
</dbReference>
<dbReference type="GO" id="GO:0000103">
    <property type="term" value="P:sulfate assimilation"/>
    <property type="evidence" value="ECO:0007669"/>
    <property type="project" value="UniProtKB-UniRule"/>
</dbReference>
<dbReference type="FunFam" id="3.40.50.620:FF:000002">
    <property type="entry name" value="Sulfate adenylyltransferase subunit 2"/>
    <property type="match status" value="1"/>
</dbReference>
<dbReference type="Gene3D" id="3.40.50.620">
    <property type="entry name" value="HUPs"/>
    <property type="match status" value="1"/>
</dbReference>
<dbReference type="HAMAP" id="MF_00064">
    <property type="entry name" value="Sulf_adenylyltr_sub2"/>
    <property type="match status" value="1"/>
</dbReference>
<dbReference type="InterPro" id="IPR002500">
    <property type="entry name" value="PAPS_reduct_dom"/>
</dbReference>
<dbReference type="InterPro" id="IPR014729">
    <property type="entry name" value="Rossmann-like_a/b/a_fold"/>
</dbReference>
<dbReference type="InterPro" id="IPR011784">
    <property type="entry name" value="SO4_adenylTrfase_ssu"/>
</dbReference>
<dbReference type="InterPro" id="IPR050128">
    <property type="entry name" value="Sulfate_adenylyltrnsfr_sub2"/>
</dbReference>
<dbReference type="NCBIfam" id="TIGR02039">
    <property type="entry name" value="CysD"/>
    <property type="match status" value="1"/>
</dbReference>
<dbReference type="NCBIfam" id="NF003587">
    <property type="entry name" value="PRK05253.1"/>
    <property type="match status" value="1"/>
</dbReference>
<dbReference type="NCBIfam" id="NF009214">
    <property type="entry name" value="PRK12563.1"/>
    <property type="match status" value="1"/>
</dbReference>
<dbReference type="PANTHER" id="PTHR43196">
    <property type="entry name" value="SULFATE ADENYLYLTRANSFERASE SUBUNIT 2"/>
    <property type="match status" value="1"/>
</dbReference>
<dbReference type="PANTHER" id="PTHR43196:SF1">
    <property type="entry name" value="SULFATE ADENYLYLTRANSFERASE SUBUNIT 2"/>
    <property type="match status" value="1"/>
</dbReference>
<dbReference type="Pfam" id="PF01507">
    <property type="entry name" value="PAPS_reduct"/>
    <property type="match status" value="1"/>
</dbReference>
<dbReference type="PIRSF" id="PIRSF002936">
    <property type="entry name" value="CysDAde_trans"/>
    <property type="match status" value="1"/>
</dbReference>
<dbReference type="SUPFAM" id="SSF52402">
    <property type="entry name" value="Adenine nucleotide alpha hydrolases-like"/>
    <property type="match status" value="1"/>
</dbReference>
<accession>Q1MJV3</accession>
<evidence type="ECO:0000255" key="1">
    <source>
        <dbReference type="HAMAP-Rule" id="MF_00064"/>
    </source>
</evidence>
<evidence type="ECO:0000256" key="2">
    <source>
        <dbReference type="SAM" id="MobiDB-lite"/>
    </source>
</evidence>
<organism>
    <name type="scientific">Rhizobium johnstonii (strain DSM 114642 / LMG 32736 / 3841)</name>
    <name type="common">Rhizobium leguminosarum bv. viciae</name>
    <dbReference type="NCBI Taxonomy" id="216596"/>
    <lineage>
        <taxon>Bacteria</taxon>
        <taxon>Pseudomonadati</taxon>
        <taxon>Pseudomonadota</taxon>
        <taxon>Alphaproteobacteria</taxon>
        <taxon>Hyphomicrobiales</taxon>
        <taxon>Rhizobiaceae</taxon>
        <taxon>Rhizobium/Agrobacterium group</taxon>
        <taxon>Rhizobium</taxon>
        <taxon>Rhizobium johnstonii</taxon>
    </lineage>
</organism>
<feature type="chain" id="PRO_1000008977" description="Sulfate adenylyltransferase subunit 2">
    <location>
        <begin position="1"/>
        <end position="317"/>
    </location>
</feature>
<feature type="region of interest" description="Disordered" evidence="2">
    <location>
        <begin position="1"/>
        <end position="21"/>
    </location>
</feature>
<feature type="region of interest" description="Disordered" evidence="2">
    <location>
        <begin position="298"/>
        <end position="317"/>
    </location>
</feature>
<proteinExistence type="inferred from homology"/>
<gene>
    <name evidence="1" type="primary">cysD</name>
    <name type="ordered locus">RL1261</name>
</gene>
<protein>
    <recommendedName>
        <fullName evidence="1">Sulfate adenylyltransferase subunit 2</fullName>
        <ecNumber evidence="1">2.7.7.4</ecNumber>
    </recommendedName>
    <alternativeName>
        <fullName evidence="1">ATP-sulfurylase small subunit</fullName>
    </alternativeName>
    <alternativeName>
        <fullName evidence="1">Sulfate adenylate transferase</fullName>
        <shortName evidence="1">SAT</shortName>
    </alternativeName>
</protein>
<sequence>MPDSRPDTELSNPQSAKAPLDPHLKALENESIHIFREVAAEFERPVMLYSIGKDSSVLLHLARKAFYPGRVPFPLLHVNTGWKFSEMIAFRDETAKKYDLDLIEHINPRGKAENITPFTHGSAAFTDIMKTEGLRQALDAGQFDAAFGGARRDEEASRAKERIYSFRTPDHRWDPRNQRPELWNIYNGMIRKGESVRAFPLSNWTEVDIWRYIQAEDIPLVPLYYAKKRPFVERDGMMILAEDPRLELLPGEVRQEGMIRFRTLGDFPLTGAIRSQATTLEEVIAELEIATVSERQGRAIDRDQSGSMEKKKREGYF</sequence>